<feature type="chain" id="PRO_0000297377" description="3-methyl-2-oxobutanoate hydroxymethyltransferase">
    <location>
        <begin position="1"/>
        <end position="264"/>
    </location>
</feature>
<feature type="active site" description="Proton acceptor" evidence="1">
    <location>
        <position position="181"/>
    </location>
</feature>
<feature type="binding site" evidence="1">
    <location>
        <begin position="45"/>
        <end position="46"/>
    </location>
    <ligand>
        <name>3-methyl-2-oxobutanoate</name>
        <dbReference type="ChEBI" id="CHEBI:11851"/>
    </ligand>
</feature>
<feature type="binding site" evidence="1">
    <location>
        <position position="45"/>
    </location>
    <ligand>
        <name>Mg(2+)</name>
        <dbReference type="ChEBI" id="CHEBI:18420"/>
    </ligand>
</feature>
<feature type="binding site" evidence="1">
    <location>
        <position position="84"/>
    </location>
    <ligand>
        <name>3-methyl-2-oxobutanoate</name>
        <dbReference type="ChEBI" id="CHEBI:11851"/>
    </ligand>
</feature>
<feature type="binding site" evidence="1">
    <location>
        <position position="84"/>
    </location>
    <ligand>
        <name>Mg(2+)</name>
        <dbReference type="ChEBI" id="CHEBI:18420"/>
    </ligand>
</feature>
<feature type="binding site" evidence="1">
    <location>
        <position position="112"/>
    </location>
    <ligand>
        <name>3-methyl-2-oxobutanoate</name>
        <dbReference type="ChEBI" id="CHEBI:11851"/>
    </ligand>
</feature>
<feature type="binding site" evidence="1">
    <location>
        <position position="114"/>
    </location>
    <ligand>
        <name>Mg(2+)</name>
        <dbReference type="ChEBI" id="CHEBI:18420"/>
    </ligand>
</feature>
<comment type="function">
    <text evidence="1">Catalyzes the reversible reaction in which hydroxymethyl group from 5,10-methylenetetrahydrofolate is transferred onto alpha-ketoisovalerate to form ketopantoate.</text>
</comment>
<comment type="catalytic activity">
    <reaction evidence="1">
        <text>3-methyl-2-oxobutanoate + (6R)-5,10-methylene-5,6,7,8-tetrahydrofolate + H2O = 2-dehydropantoate + (6S)-5,6,7,8-tetrahydrofolate</text>
        <dbReference type="Rhea" id="RHEA:11824"/>
        <dbReference type="ChEBI" id="CHEBI:11561"/>
        <dbReference type="ChEBI" id="CHEBI:11851"/>
        <dbReference type="ChEBI" id="CHEBI:15377"/>
        <dbReference type="ChEBI" id="CHEBI:15636"/>
        <dbReference type="ChEBI" id="CHEBI:57453"/>
        <dbReference type="EC" id="2.1.2.11"/>
    </reaction>
</comment>
<comment type="cofactor">
    <cofactor evidence="1">
        <name>Mg(2+)</name>
        <dbReference type="ChEBI" id="CHEBI:18420"/>
    </cofactor>
    <text evidence="1">Binds 1 Mg(2+) ion per subunit.</text>
</comment>
<comment type="pathway">
    <text evidence="1">Cofactor biosynthesis; (R)-pantothenate biosynthesis; (R)-pantoate from 3-methyl-2-oxobutanoate: step 1/2.</text>
</comment>
<comment type="subunit">
    <text evidence="1">Homodecamer; pentamer of dimers.</text>
</comment>
<comment type="subcellular location">
    <subcellularLocation>
        <location evidence="1">Cytoplasm</location>
    </subcellularLocation>
</comment>
<comment type="similarity">
    <text evidence="1">Belongs to the PanB family.</text>
</comment>
<protein>
    <recommendedName>
        <fullName evidence="1">3-methyl-2-oxobutanoate hydroxymethyltransferase</fullName>
        <ecNumber evidence="1">2.1.2.11</ecNumber>
    </recommendedName>
    <alternativeName>
        <fullName evidence="1">Ketopantoate hydroxymethyltransferase</fullName>
        <shortName evidence="1">KPHMT</shortName>
    </alternativeName>
</protein>
<accession>Q0T867</accession>
<name>PANB_SHIF8</name>
<dbReference type="EC" id="2.1.2.11" evidence="1"/>
<dbReference type="EMBL" id="CP000266">
    <property type="protein sequence ID" value="ABF02409.1"/>
    <property type="molecule type" value="Genomic_DNA"/>
</dbReference>
<dbReference type="RefSeq" id="WP_000805476.1">
    <property type="nucleotide sequence ID" value="NC_008258.1"/>
</dbReference>
<dbReference type="SMR" id="Q0T867"/>
<dbReference type="KEGG" id="sfv:SFV_0124"/>
<dbReference type="HOGENOM" id="CLU_036645_1_0_6"/>
<dbReference type="UniPathway" id="UPA00028">
    <property type="reaction ID" value="UER00003"/>
</dbReference>
<dbReference type="Proteomes" id="UP000000659">
    <property type="component" value="Chromosome"/>
</dbReference>
<dbReference type="GO" id="GO:0005737">
    <property type="term" value="C:cytoplasm"/>
    <property type="evidence" value="ECO:0007669"/>
    <property type="project" value="UniProtKB-SubCell"/>
</dbReference>
<dbReference type="GO" id="GO:0003864">
    <property type="term" value="F:3-methyl-2-oxobutanoate hydroxymethyltransferase activity"/>
    <property type="evidence" value="ECO:0007669"/>
    <property type="project" value="UniProtKB-UniRule"/>
</dbReference>
<dbReference type="GO" id="GO:0000287">
    <property type="term" value="F:magnesium ion binding"/>
    <property type="evidence" value="ECO:0007669"/>
    <property type="project" value="TreeGrafter"/>
</dbReference>
<dbReference type="GO" id="GO:0015940">
    <property type="term" value="P:pantothenate biosynthetic process"/>
    <property type="evidence" value="ECO:0007669"/>
    <property type="project" value="UniProtKB-UniRule"/>
</dbReference>
<dbReference type="CDD" id="cd06557">
    <property type="entry name" value="KPHMT-like"/>
    <property type="match status" value="1"/>
</dbReference>
<dbReference type="FunFam" id="3.20.20.60:FF:000003">
    <property type="entry name" value="3-methyl-2-oxobutanoate hydroxymethyltransferase"/>
    <property type="match status" value="1"/>
</dbReference>
<dbReference type="Gene3D" id="3.20.20.60">
    <property type="entry name" value="Phosphoenolpyruvate-binding domains"/>
    <property type="match status" value="1"/>
</dbReference>
<dbReference type="HAMAP" id="MF_00156">
    <property type="entry name" value="PanB"/>
    <property type="match status" value="1"/>
</dbReference>
<dbReference type="InterPro" id="IPR003700">
    <property type="entry name" value="Pantoate_hydroxy_MeTrfase"/>
</dbReference>
<dbReference type="InterPro" id="IPR015813">
    <property type="entry name" value="Pyrv/PenolPyrv_kinase-like_dom"/>
</dbReference>
<dbReference type="InterPro" id="IPR040442">
    <property type="entry name" value="Pyrv_kinase-like_dom_sf"/>
</dbReference>
<dbReference type="NCBIfam" id="TIGR00222">
    <property type="entry name" value="panB"/>
    <property type="match status" value="1"/>
</dbReference>
<dbReference type="NCBIfam" id="NF001452">
    <property type="entry name" value="PRK00311.1"/>
    <property type="match status" value="1"/>
</dbReference>
<dbReference type="PANTHER" id="PTHR20881">
    <property type="entry name" value="3-METHYL-2-OXOBUTANOATE HYDROXYMETHYLTRANSFERASE"/>
    <property type="match status" value="1"/>
</dbReference>
<dbReference type="PANTHER" id="PTHR20881:SF0">
    <property type="entry name" value="3-METHYL-2-OXOBUTANOATE HYDROXYMETHYLTRANSFERASE"/>
    <property type="match status" value="1"/>
</dbReference>
<dbReference type="Pfam" id="PF02548">
    <property type="entry name" value="Pantoate_transf"/>
    <property type="match status" value="1"/>
</dbReference>
<dbReference type="PIRSF" id="PIRSF000388">
    <property type="entry name" value="Pantoate_hydroxy_MeTrfase"/>
    <property type="match status" value="1"/>
</dbReference>
<dbReference type="SUPFAM" id="SSF51621">
    <property type="entry name" value="Phosphoenolpyruvate/pyruvate domain"/>
    <property type="match status" value="1"/>
</dbReference>
<proteinExistence type="inferred from homology"/>
<gene>
    <name evidence="1" type="primary">panB</name>
    <name type="ordered locus">SFV_0124</name>
</gene>
<evidence type="ECO:0000255" key="1">
    <source>
        <dbReference type="HAMAP-Rule" id="MF_00156"/>
    </source>
</evidence>
<organism>
    <name type="scientific">Shigella flexneri serotype 5b (strain 8401)</name>
    <dbReference type="NCBI Taxonomy" id="373384"/>
    <lineage>
        <taxon>Bacteria</taxon>
        <taxon>Pseudomonadati</taxon>
        <taxon>Pseudomonadota</taxon>
        <taxon>Gammaproteobacteria</taxon>
        <taxon>Enterobacterales</taxon>
        <taxon>Enterobacteriaceae</taxon>
        <taxon>Shigella</taxon>
    </lineage>
</organism>
<reference key="1">
    <citation type="journal article" date="2006" name="BMC Genomics">
        <title>Complete genome sequence of Shigella flexneri 5b and comparison with Shigella flexneri 2a.</title>
        <authorList>
            <person name="Nie H."/>
            <person name="Yang F."/>
            <person name="Zhang X."/>
            <person name="Yang J."/>
            <person name="Chen L."/>
            <person name="Wang J."/>
            <person name="Xiong Z."/>
            <person name="Peng J."/>
            <person name="Sun L."/>
            <person name="Dong J."/>
            <person name="Xue Y."/>
            <person name="Xu X."/>
            <person name="Chen S."/>
            <person name="Yao Z."/>
            <person name="Shen Y."/>
            <person name="Jin Q."/>
        </authorList>
    </citation>
    <scope>NUCLEOTIDE SEQUENCE [LARGE SCALE GENOMIC DNA]</scope>
    <source>
        <strain>8401</strain>
    </source>
</reference>
<sequence length="264" mass="28238">MKPTTIASLQKYKQDKKRFATITAYDYSFAKLFADEGLNVMLVGDSLGMTVQGHDSTLPVTVADIAYHTAAVRRGAPNCLLLADLPFMAYATPEQAFENAATVMRAGANMVKIEGGEWLVETVKMLTERAVPVCGHLGLTPQSVNIFGGYKVQGRGNEASDRLLSDALALEAAGAQLLVLECVPVELAKRITEALAIPVIGIGAGNVTDGQILVMHDAFGITGGHIPKFAKNFLAETGDIRAAVRQYMAEVESGVYPGEEHSFH</sequence>
<keyword id="KW-0963">Cytoplasm</keyword>
<keyword id="KW-0460">Magnesium</keyword>
<keyword id="KW-0479">Metal-binding</keyword>
<keyword id="KW-0566">Pantothenate biosynthesis</keyword>
<keyword id="KW-0808">Transferase</keyword>